<keyword id="KW-0963">Cytoplasm</keyword>
<keyword id="KW-0489">Methyltransferase</keyword>
<keyword id="KW-1185">Reference proteome</keyword>
<keyword id="KW-0949">S-adenosyl-L-methionine</keyword>
<keyword id="KW-0808">Transferase</keyword>
<keyword id="KW-0819">tRNA processing</keyword>
<comment type="function">
    <text evidence="1">Specifically catalyzes the N1-methylation of pseudouridine at position 54 (Psi54) in tRNAs.</text>
</comment>
<comment type="catalytic activity">
    <reaction evidence="1">
        <text>pseudouridine(54) in tRNA + S-adenosyl-L-methionine = N(1)-methylpseudouridine(54) in tRNA + S-adenosyl-L-homocysteine + H(+)</text>
        <dbReference type="Rhea" id="RHEA:55292"/>
        <dbReference type="Rhea" id="RHEA-COMP:14140"/>
        <dbReference type="Rhea" id="RHEA-COMP:14141"/>
        <dbReference type="ChEBI" id="CHEBI:15378"/>
        <dbReference type="ChEBI" id="CHEBI:57856"/>
        <dbReference type="ChEBI" id="CHEBI:59789"/>
        <dbReference type="ChEBI" id="CHEBI:65314"/>
        <dbReference type="ChEBI" id="CHEBI:74890"/>
        <dbReference type="EC" id="2.1.1.257"/>
    </reaction>
</comment>
<comment type="subunit">
    <text evidence="1">Homodimer.</text>
</comment>
<comment type="subcellular location">
    <subcellularLocation>
        <location evidence="1">Cytoplasm</location>
    </subcellularLocation>
</comment>
<comment type="similarity">
    <text evidence="1">Belongs to the methyltransferase superfamily. TrmY family.</text>
</comment>
<reference key="1">
    <citation type="journal article" date="2005" name="Genome Res.">
        <title>Complete genome sequence of the hyperthermophilic archaeon Thermococcus kodakaraensis KOD1 and comparison with Pyrococcus genomes.</title>
        <authorList>
            <person name="Fukui T."/>
            <person name="Atomi H."/>
            <person name="Kanai T."/>
            <person name="Matsumi R."/>
            <person name="Fujiwara S."/>
            <person name="Imanaka T."/>
        </authorList>
    </citation>
    <scope>NUCLEOTIDE SEQUENCE [LARGE SCALE GENOMIC DNA]</scope>
    <source>
        <strain>ATCC BAA-918 / JCM 12380 / KOD1</strain>
    </source>
</reference>
<accession>Q5JF45</accession>
<gene>
    <name evidence="1" type="primary">trmY</name>
    <name type="ordered locus">TK0554</name>
</gene>
<organism>
    <name type="scientific">Thermococcus kodakarensis (strain ATCC BAA-918 / JCM 12380 / KOD1)</name>
    <name type="common">Pyrococcus kodakaraensis (strain KOD1)</name>
    <dbReference type="NCBI Taxonomy" id="69014"/>
    <lineage>
        <taxon>Archaea</taxon>
        <taxon>Methanobacteriati</taxon>
        <taxon>Methanobacteriota</taxon>
        <taxon>Thermococci</taxon>
        <taxon>Thermococcales</taxon>
        <taxon>Thermococcaceae</taxon>
        <taxon>Thermococcus</taxon>
    </lineage>
</organism>
<dbReference type="EC" id="2.1.1.257" evidence="1"/>
<dbReference type="EMBL" id="AP006878">
    <property type="protein sequence ID" value="BAD84743.1"/>
    <property type="molecule type" value="Genomic_DNA"/>
</dbReference>
<dbReference type="RefSeq" id="WP_011249509.1">
    <property type="nucleotide sequence ID" value="NC_006624.1"/>
</dbReference>
<dbReference type="SMR" id="Q5JF45"/>
<dbReference type="STRING" id="69014.TK0554"/>
<dbReference type="EnsemblBacteria" id="BAD84743">
    <property type="protein sequence ID" value="BAD84743"/>
    <property type="gene ID" value="TK0554"/>
</dbReference>
<dbReference type="GeneID" id="78447068"/>
<dbReference type="KEGG" id="tko:TK0554"/>
<dbReference type="PATRIC" id="fig|69014.16.peg.542"/>
<dbReference type="eggNOG" id="arCOG01239">
    <property type="taxonomic scope" value="Archaea"/>
</dbReference>
<dbReference type="HOGENOM" id="CLU_107018_0_0_2"/>
<dbReference type="InParanoid" id="Q5JF45"/>
<dbReference type="OrthoDB" id="27492at2157"/>
<dbReference type="PhylomeDB" id="Q5JF45"/>
<dbReference type="Proteomes" id="UP000000536">
    <property type="component" value="Chromosome"/>
</dbReference>
<dbReference type="GO" id="GO:0005737">
    <property type="term" value="C:cytoplasm"/>
    <property type="evidence" value="ECO:0007669"/>
    <property type="project" value="UniProtKB-SubCell"/>
</dbReference>
<dbReference type="GO" id="GO:0008757">
    <property type="term" value="F:S-adenosylmethionine-dependent methyltransferase activity"/>
    <property type="evidence" value="ECO:0000318"/>
    <property type="project" value="GO_Central"/>
</dbReference>
<dbReference type="GO" id="GO:0008175">
    <property type="term" value="F:tRNA methyltransferase activity"/>
    <property type="evidence" value="ECO:0000318"/>
    <property type="project" value="GO_Central"/>
</dbReference>
<dbReference type="GO" id="GO:0030488">
    <property type="term" value="P:tRNA methylation"/>
    <property type="evidence" value="ECO:0000318"/>
    <property type="project" value="GO_Central"/>
</dbReference>
<dbReference type="CDD" id="cd18087">
    <property type="entry name" value="TrmY-like"/>
    <property type="match status" value="1"/>
</dbReference>
<dbReference type="Gene3D" id="3.40.1280.10">
    <property type="match status" value="1"/>
</dbReference>
<dbReference type="HAMAP" id="MF_00587">
    <property type="entry name" value="tRNA_methyltr_TrmY"/>
    <property type="match status" value="1"/>
</dbReference>
<dbReference type="InterPro" id="IPR029028">
    <property type="entry name" value="Alpha/beta_knot_MTases"/>
</dbReference>
<dbReference type="InterPro" id="IPR007158">
    <property type="entry name" value="TrmY"/>
</dbReference>
<dbReference type="InterPro" id="IPR029026">
    <property type="entry name" value="tRNA_m1G_MTases_N"/>
</dbReference>
<dbReference type="NCBIfam" id="NF002560">
    <property type="entry name" value="PRK02135.1"/>
    <property type="match status" value="1"/>
</dbReference>
<dbReference type="PANTHER" id="PTHR40703">
    <property type="entry name" value="TRNA (PSEUDOURIDINE(54)-N(1))-METHYLTRANSFERASE"/>
    <property type="match status" value="1"/>
</dbReference>
<dbReference type="PANTHER" id="PTHR40703:SF1">
    <property type="entry name" value="TRNA (PSEUDOURIDINE(54)-N(1))-METHYLTRANSFERASE"/>
    <property type="match status" value="1"/>
</dbReference>
<dbReference type="Pfam" id="PF04013">
    <property type="entry name" value="Methyltrn_RNA_2"/>
    <property type="match status" value="1"/>
</dbReference>
<dbReference type="SUPFAM" id="SSF75217">
    <property type="entry name" value="alpha/beta knot"/>
    <property type="match status" value="1"/>
</dbReference>
<protein>
    <recommendedName>
        <fullName evidence="1">tRNA (pseudouridine(54)-N(1))-methyltransferase</fullName>
        <ecNumber evidence="1">2.1.1.257</ecNumber>
    </recommendedName>
</protein>
<proteinExistence type="inferred from homology"/>
<sequence length="198" mass="22465">MRTFILKANTAVTSPDFSLKDLPGTGGRIDLLCRFLNSAFLLSHGIRKDVRVFMTLYGRPNPPKTIHFEGPKLKVRLNPDERSTALILKKALKIGEDLREPTKEVEVFPGVYVSNMTFEDVVRRVMKDSTLYYLVEDGKPITEIEFPQNPAFVLGDHLGLSKEDERFLEGIAKKVRIGRRSYLASHVVAFVNIWLDGM</sequence>
<name>TRMY_THEKO</name>
<feature type="chain" id="PRO_0000157955" description="tRNA (pseudouridine(54)-N(1))-methyltransferase">
    <location>
        <begin position="1"/>
        <end position="198"/>
    </location>
</feature>
<feature type="binding site" evidence="1">
    <location>
        <position position="134"/>
    </location>
    <ligand>
        <name>S-adenosyl-L-methionine</name>
        <dbReference type="ChEBI" id="CHEBI:59789"/>
    </ligand>
</feature>
<feature type="binding site" evidence="1">
    <location>
        <position position="155"/>
    </location>
    <ligand>
        <name>S-adenosyl-L-methionine</name>
        <dbReference type="ChEBI" id="CHEBI:59789"/>
    </ligand>
</feature>
<evidence type="ECO:0000255" key="1">
    <source>
        <dbReference type="HAMAP-Rule" id="MF_00587"/>
    </source>
</evidence>